<accession>Q3E9A4</accession>
<accession>F4K474</accession>
<sequence>MEQSNFVNMKLSLVPTLLLLLVLLVFYQHHSSPNLNSNALSSFVDATSLAPSPSPSLSMEFSVASSNLSTISSPPENKGNKRNIIEEGLAKSRSAIREAVRLKKFVSDKEETFVPRGAVYRNAFAFHQSHIEMEKKFKVWVYREGETPLVHMGPMNNIYSIEGQFMDEIETGMSPFAANNPEEAHAFLLPVSVANIVHYLYRPLVTYSREQLHKVFLDYVDVVAHKYPYWNRSLGADHFYVSCHDWAPDVSGSNPELMKNLIRVLCNANTSEGFMPQRDVSIPEINIPGGHLGPPRLSRSSGHDRPILAFFAGGSHGYIRRILLQHWKDKDEEVQVHEYLAKNKDYFKLMATARFCLCPSGYEVASPRVVAAINLGCVPVIISDHYALPFSDVLDWTKFTIHVPSKKIPEIKTILKSISWRRYRVLQRRVLQVQRHFVINRPSQPFDMLRMLLHSVWLRRLNLRLP</sequence>
<protein>
    <recommendedName>
        <fullName>Probable glycosyltransferase At5g20260</fullName>
        <ecNumber>2.4.-.-</ecNumber>
    </recommendedName>
</protein>
<proteinExistence type="inferred from homology"/>
<name>GLYT5_ARATH</name>
<comment type="function">
    <text>May be involved in cell wall biosynthesis.</text>
</comment>
<comment type="subcellular location">
    <subcellularLocation>
        <location evidence="1">Golgi apparatus membrane</location>
        <topology evidence="1">Single-pass type II membrane protein</topology>
    </subcellularLocation>
</comment>
<comment type="similarity">
    <text evidence="3">Belongs to the glycosyltransferase 47 family.</text>
</comment>
<evidence type="ECO:0000250" key="1"/>
<evidence type="ECO:0000255" key="2"/>
<evidence type="ECO:0000305" key="3"/>
<reference key="1">
    <citation type="journal article" date="2000" name="Nature">
        <title>Sequence and analysis of chromosome 5 of the plant Arabidopsis thaliana.</title>
        <authorList>
            <person name="Tabata S."/>
            <person name="Kaneko T."/>
            <person name="Nakamura Y."/>
            <person name="Kotani H."/>
            <person name="Kato T."/>
            <person name="Asamizu E."/>
            <person name="Miyajima N."/>
            <person name="Sasamoto S."/>
            <person name="Kimura T."/>
            <person name="Hosouchi T."/>
            <person name="Kawashima K."/>
            <person name="Kohara M."/>
            <person name="Matsumoto M."/>
            <person name="Matsuno A."/>
            <person name="Muraki A."/>
            <person name="Nakayama S."/>
            <person name="Nakazaki N."/>
            <person name="Naruo K."/>
            <person name="Okumura S."/>
            <person name="Shinpo S."/>
            <person name="Takeuchi C."/>
            <person name="Wada T."/>
            <person name="Watanabe A."/>
            <person name="Yamada M."/>
            <person name="Yasuda M."/>
            <person name="Sato S."/>
            <person name="de la Bastide M."/>
            <person name="Huang E."/>
            <person name="Spiegel L."/>
            <person name="Gnoj L."/>
            <person name="O'Shaughnessy A."/>
            <person name="Preston R."/>
            <person name="Habermann K."/>
            <person name="Murray J."/>
            <person name="Johnson D."/>
            <person name="Rohlfing T."/>
            <person name="Nelson J."/>
            <person name="Stoneking T."/>
            <person name="Pepin K."/>
            <person name="Spieth J."/>
            <person name="Sekhon M."/>
            <person name="Armstrong J."/>
            <person name="Becker M."/>
            <person name="Belter E."/>
            <person name="Cordum H."/>
            <person name="Cordes M."/>
            <person name="Courtney L."/>
            <person name="Courtney W."/>
            <person name="Dante M."/>
            <person name="Du H."/>
            <person name="Edwards J."/>
            <person name="Fryman J."/>
            <person name="Haakensen B."/>
            <person name="Lamar E."/>
            <person name="Latreille P."/>
            <person name="Leonard S."/>
            <person name="Meyer R."/>
            <person name="Mulvaney E."/>
            <person name="Ozersky P."/>
            <person name="Riley A."/>
            <person name="Strowmatt C."/>
            <person name="Wagner-McPherson C."/>
            <person name="Wollam A."/>
            <person name="Yoakum M."/>
            <person name="Bell M."/>
            <person name="Dedhia N."/>
            <person name="Parnell L."/>
            <person name="Shah R."/>
            <person name="Rodriguez M."/>
            <person name="Hoon See L."/>
            <person name="Vil D."/>
            <person name="Baker J."/>
            <person name="Kirchoff K."/>
            <person name="Toth K."/>
            <person name="King L."/>
            <person name="Bahret A."/>
            <person name="Miller B."/>
            <person name="Marra M.A."/>
            <person name="Martienssen R."/>
            <person name="McCombie W.R."/>
            <person name="Wilson R.K."/>
            <person name="Murphy G."/>
            <person name="Bancroft I."/>
            <person name="Volckaert G."/>
            <person name="Wambutt R."/>
            <person name="Duesterhoeft A."/>
            <person name="Stiekema W."/>
            <person name="Pohl T."/>
            <person name="Entian K.-D."/>
            <person name="Terryn N."/>
            <person name="Hartley N."/>
            <person name="Bent E."/>
            <person name="Johnson S."/>
            <person name="Langham S.-A."/>
            <person name="McCullagh B."/>
            <person name="Robben J."/>
            <person name="Grymonprez B."/>
            <person name="Zimmermann W."/>
            <person name="Ramsperger U."/>
            <person name="Wedler H."/>
            <person name="Balke K."/>
            <person name="Wedler E."/>
            <person name="Peters S."/>
            <person name="van Staveren M."/>
            <person name="Dirkse W."/>
            <person name="Mooijman P."/>
            <person name="Klein Lankhorst R."/>
            <person name="Weitzenegger T."/>
            <person name="Bothe G."/>
            <person name="Rose M."/>
            <person name="Hauf J."/>
            <person name="Berneiser S."/>
            <person name="Hempel S."/>
            <person name="Feldpausch M."/>
            <person name="Lamberth S."/>
            <person name="Villarroel R."/>
            <person name="Gielen J."/>
            <person name="Ardiles W."/>
            <person name="Bents O."/>
            <person name="Lemcke K."/>
            <person name="Kolesov G."/>
            <person name="Mayer K.F.X."/>
            <person name="Rudd S."/>
            <person name="Schoof H."/>
            <person name="Schueller C."/>
            <person name="Zaccaria P."/>
            <person name="Mewes H.-W."/>
            <person name="Bevan M."/>
            <person name="Fransz P.F."/>
        </authorList>
    </citation>
    <scope>NUCLEOTIDE SEQUENCE [LARGE SCALE GENOMIC DNA]</scope>
    <source>
        <strain>cv. Columbia</strain>
    </source>
</reference>
<reference key="2">
    <citation type="journal article" date="2017" name="Plant J.">
        <title>Araport11: a complete reannotation of the Arabidopsis thaliana reference genome.</title>
        <authorList>
            <person name="Cheng C.Y."/>
            <person name="Krishnakumar V."/>
            <person name="Chan A.P."/>
            <person name="Thibaud-Nissen F."/>
            <person name="Schobel S."/>
            <person name="Town C.D."/>
        </authorList>
    </citation>
    <scope>GENOME REANNOTATION</scope>
    <source>
        <strain>cv. Columbia</strain>
    </source>
</reference>
<reference key="3">
    <citation type="journal article" date="2008" name="Plant Cell">
        <title>Identification of a xylogalacturonan xylosyltransferase involved in pectin biosynthesis in Arabidopsis.</title>
        <authorList>
            <person name="Jensen J.K."/>
            <person name="Sorensen S.O."/>
            <person name="Harholt J."/>
            <person name="Geshi N."/>
            <person name="Sakuragi Y."/>
            <person name="Moller I."/>
            <person name="Zandleven J."/>
            <person name="Bernal A.J."/>
            <person name="Jensen N.B."/>
            <person name="Sorensen C."/>
            <person name="Pauly M."/>
            <person name="Beldman G."/>
            <person name="Willats W.G."/>
            <person name="Scheller H.V."/>
        </authorList>
    </citation>
    <scope>IDENTIFICATION</scope>
</reference>
<gene>
    <name type="ordered locus">At5g20260</name>
    <name type="ORF">F5O24.150</name>
</gene>
<keyword id="KW-0961">Cell wall biogenesis/degradation</keyword>
<keyword id="KW-0325">Glycoprotein</keyword>
<keyword id="KW-0328">Glycosyltransferase</keyword>
<keyword id="KW-0333">Golgi apparatus</keyword>
<keyword id="KW-0472">Membrane</keyword>
<keyword id="KW-1185">Reference proteome</keyword>
<keyword id="KW-0735">Signal-anchor</keyword>
<keyword id="KW-0808">Transferase</keyword>
<keyword id="KW-0812">Transmembrane</keyword>
<keyword id="KW-1133">Transmembrane helix</keyword>
<organism>
    <name type="scientific">Arabidopsis thaliana</name>
    <name type="common">Mouse-ear cress</name>
    <dbReference type="NCBI Taxonomy" id="3702"/>
    <lineage>
        <taxon>Eukaryota</taxon>
        <taxon>Viridiplantae</taxon>
        <taxon>Streptophyta</taxon>
        <taxon>Embryophyta</taxon>
        <taxon>Tracheophyta</taxon>
        <taxon>Spermatophyta</taxon>
        <taxon>Magnoliopsida</taxon>
        <taxon>eudicotyledons</taxon>
        <taxon>Gunneridae</taxon>
        <taxon>Pentapetalae</taxon>
        <taxon>rosids</taxon>
        <taxon>malvids</taxon>
        <taxon>Brassicales</taxon>
        <taxon>Brassicaceae</taxon>
        <taxon>Camelineae</taxon>
        <taxon>Arabidopsis</taxon>
    </lineage>
</organism>
<feature type="chain" id="PRO_0000392296" description="Probable glycosyltransferase At5g20260">
    <location>
        <begin position="1"/>
        <end position="466"/>
    </location>
</feature>
<feature type="topological domain" description="Cytoplasmic" evidence="2">
    <location>
        <begin position="1"/>
        <end position="5"/>
    </location>
</feature>
<feature type="transmembrane region" description="Helical; Signal-anchor for type II membrane protein" evidence="2">
    <location>
        <begin position="6"/>
        <end position="26"/>
    </location>
</feature>
<feature type="topological domain" description="Lumenal" evidence="2">
    <location>
        <begin position="27"/>
        <end position="466"/>
    </location>
</feature>
<feature type="glycosylation site" description="N-linked (GlcNAc...) asparagine" evidence="2">
    <location>
        <position position="67"/>
    </location>
</feature>
<feature type="glycosylation site" description="N-linked (GlcNAc...) asparagine" evidence="2">
    <location>
        <position position="231"/>
    </location>
</feature>
<feature type="glycosylation site" description="N-linked (GlcNAc...) asparagine" evidence="2">
    <location>
        <position position="269"/>
    </location>
</feature>
<dbReference type="EC" id="2.4.-.-"/>
<dbReference type="EMBL" id="AF296825">
    <property type="status" value="NOT_ANNOTATED_CDS"/>
    <property type="molecule type" value="Genomic_DNA"/>
</dbReference>
<dbReference type="EMBL" id="CP002688">
    <property type="protein sequence ID" value="ANM68556.1"/>
    <property type="molecule type" value="Genomic_DNA"/>
</dbReference>
<dbReference type="RefSeq" id="NP_197526.6">
    <property type="nucleotide sequence ID" value="NM_122033.6"/>
</dbReference>
<dbReference type="SMR" id="Q3E9A4"/>
<dbReference type="FunCoup" id="Q3E9A4">
    <property type="interactions" value="4"/>
</dbReference>
<dbReference type="STRING" id="3702.Q3E9A4"/>
<dbReference type="CAZy" id="GT47">
    <property type="family name" value="Glycosyltransferase Family 47"/>
</dbReference>
<dbReference type="GlyGen" id="Q3E9A4">
    <property type="glycosylation" value="3 sites"/>
</dbReference>
<dbReference type="PaxDb" id="3702-AT5G20260.1"/>
<dbReference type="DNASU" id="832148"/>
<dbReference type="EnsemblPlants" id="AT5G20260.2">
    <property type="protein sequence ID" value="AT5G20260.2"/>
    <property type="gene ID" value="AT5G20260"/>
</dbReference>
<dbReference type="GeneID" id="832148"/>
<dbReference type="Gramene" id="AT5G20260.2">
    <property type="protein sequence ID" value="AT5G20260.2"/>
    <property type="gene ID" value="AT5G20260"/>
</dbReference>
<dbReference type="KEGG" id="ath:AT5G20260"/>
<dbReference type="Araport" id="AT5G20260"/>
<dbReference type="TAIR" id="AT5G20260"/>
<dbReference type="eggNOG" id="KOG1021">
    <property type="taxonomic scope" value="Eukaryota"/>
</dbReference>
<dbReference type="HOGENOM" id="CLU_025166_1_4_1"/>
<dbReference type="InParanoid" id="Q3E9A4"/>
<dbReference type="PhylomeDB" id="Q3E9A4"/>
<dbReference type="PRO" id="PR:Q3E9A4"/>
<dbReference type="Proteomes" id="UP000006548">
    <property type="component" value="Chromosome 5"/>
</dbReference>
<dbReference type="ExpressionAtlas" id="Q3E9A4">
    <property type="expression patterns" value="baseline and differential"/>
</dbReference>
<dbReference type="GO" id="GO:0000139">
    <property type="term" value="C:Golgi membrane"/>
    <property type="evidence" value="ECO:0007669"/>
    <property type="project" value="UniProtKB-SubCell"/>
</dbReference>
<dbReference type="GO" id="GO:0016757">
    <property type="term" value="F:glycosyltransferase activity"/>
    <property type="evidence" value="ECO:0007669"/>
    <property type="project" value="UniProtKB-KW"/>
</dbReference>
<dbReference type="GO" id="GO:0071555">
    <property type="term" value="P:cell wall organization"/>
    <property type="evidence" value="ECO:0007669"/>
    <property type="project" value="UniProtKB-KW"/>
</dbReference>
<dbReference type="GO" id="GO:0006486">
    <property type="term" value="P:protein glycosylation"/>
    <property type="evidence" value="ECO:0007669"/>
    <property type="project" value="InterPro"/>
</dbReference>
<dbReference type="InterPro" id="IPR004263">
    <property type="entry name" value="Exostosin"/>
</dbReference>
<dbReference type="InterPro" id="IPR040911">
    <property type="entry name" value="Exostosin_GT47"/>
</dbReference>
<dbReference type="PANTHER" id="PTHR11062:SF267">
    <property type="entry name" value="EXOSTOSIN FAMILY PROTEIN"/>
    <property type="match status" value="1"/>
</dbReference>
<dbReference type="PANTHER" id="PTHR11062">
    <property type="entry name" value="EXOSTOSIN HEPARAN SULFATE GLYCOSYLTRANSFERASE -RELATED"/>
    <property type="match status" value="1"/>
</dbReference>
<dbReference type="Pfam" id="PF03016">
    <property type="entry name" value="Exostosin_GT47"/>
    <property type="match status" value="1"/>
</dbReference>